<organism>
    <name type="scientific">Mycobacterium tuberculosis (strain ATCC 25618 / H37Rv)</name>
    <dbReference type="NCBI Taxonomy" id="83332"/>
    <lineage>
        <taxon>Bacteria</taxon>
        <taxon>Bacillati</taxon>
        <taxon>Actinomycetota</taxon>
        <taxon>Actinomycetes</taxon>
        <taxon>Mycobacteriales</taxon>
        <taxon>Mycobacteriaceae</taxon>
        <taxon>Mycobacterium</taxon>
        <taxon>Mycobacterium tuberculosis complex</taxon>
    </lineage>
</organism>
<sequence>MKAGVAQQRSLLELAKLDAELTRIAHRATHLPQRAAYQQVQAEHNAANDRMAALRIAAEDLDGQVSRFESEIDAVRKRGDRDRSLLTSGATDAKQLADLQHELDSLQRRQASLEDALLEVLERREELQAQQTAESRALQALRADLAAAQQALDEALAEIDQARHQHSSQRDMLTATLDPELAGLYERQRAGGGPGAGRLQGHRCGACRIEIGRGELAQISAAAEDEVVRCPECGAILLRLEGFEE</sequence>
<keyword id="KW-0175">Coiled coil</keyword>
<keyword id="KW-1185">Reference proteome</keyword>
<dbReference type="EMBL" id="AL123456">
    <property type="protein sequence ID" value="CCP45007.1"/>
    <property type="molecule type" value="Genomic_DNA"/>
</dbReference>
<dbReference type="PIR" id="A70777">
    <property type="entry name" value="A70777"/>
</dbReference>
<dbReference type="RefSeq" id="NP_216745.1">
    <property type="nucleotide sequence ID" value="NC_000962.3"/>
</dbReference>
<dbReference type="RefSeq" id="WP_003411501.1">
    <property type="nucleotide sequence ID" value="NZ_NVQJ01000008.1"/>
</dbReference>
<dbReference type="SMR" id="P9WLH3"/>
<dbReference type="STRING" id="83332.Rv2229c"/>
<dbReference type="PaxDb" id="83332-Rv2229c"/>
<dbReference type="DNASU" id="888264"/>
<dbReference type="GeneID" id="888264"/>
<dbReference type="KEGG" id="mtu:Rv2229c"/>
<dbReference type="KEGG" id="mtv:RVBD_2229c"/>
<dbReference type="TubercuList" id="Rv2229c"/>
<dbReference type="eggNOG" id="COG1579">
    <property type="taxonomic scope" value="Bacteria"/>
</dbReference>
<dbReference type="InParanoid" id="P9WLH3"/>
<dbReference type="OrthoDB" id="9784388at2"/>
<dbReference type="Proteomes" id="UP000001584">
    <property type="component" value="Chromosome"/>
</dbReference>
<dbReference type="GO" id="GO:0009274">
    <property type="term" value="C:peptidoglycan-based cell wall"/>
    <property type="evidence" value="ECO:0007005"/>
    <property type="project" value="MTBBASE"/>
</dbReference>
<dbReference type="GO" id="GO:0005886">
    <property type="term" value="C:plasma membrane"/>
    <property type="evidence" value="ECO:0007005"/>
    <property type="project" value="MTBBASE"/>
</dbReference>
<dbReference type="Gene3D" id="1.10.287.1490">
    <property type="match status" value="1"/>
</dbReference>
<dbReference type="InterPro" id="IPR056003">
    <property type="entry name" value="CT398_CC_hairpin"/>
</dbReference>
<dbReference type="InterPro" id="IPR052376">
    <property type="entry name" value="Oxidative_Scav/Glycosyltrans"/>
</dbReference>
<dbReference type="InterPro" id="IPR003743">
    <property type="entry name" value="Zf-RING_7"/>
</dbReference>
<dbReference type="PANTHER" id="PTHR39082">
    <property type="entry name" value="PHOSPHOLIPASE C-BETA-2-RELATED"/>
    <property type="match status" value="1"/>
</dbReference>
<dbReference type="PANTHER" id="PTHR39082:SF1">
    <property type="entry name" value="SCAVENGER RECEPTOR CLASS A MEMBER 3"/>
    <property type="match status" value="1"/>
</dbReference>
<dbReference type="Pfam" id="PF24481">
    <property type="entry name" value="CT398_CC"/>
    <property type="match status" value="1"/>
</dbReference>
<dbReference type="Pfam" id="PF02591">
    <property type="entry name" value="Zn_ribbon_9"/>
    <property type="match status" value="1"/>
</dbReference>
<evidence type="ECO:0000255" key="1"/>
<feature type="chain" id="PRO_0000103983" description="Uncharacterized protein Rv2229c">
    <location>
        <begin position="1"/>
        <end position="245"/>
    </location>
</feature>
<feature type="coiled-coil region" evidence="1">
    <location>
        <begin position="33"/>
        <end position="176"/>
    </location>
</feature>
<protein>
    <recommendedName>
        <fullName>Uncharacterized protein Rv2229c</fullName>
    </recommendedName>
</protein>
<proteinExistence type="evidence at protein level"/>
<name>Y2229_MYCTU</name>
<reference key="1">
    <citation type="journal article" date="1998" name="Nature">
        <title>Deciphering the biology of Mycobacterium tuberculosis from the complete genome sequence.</title>
        <authorList>
            <person name="Cole S.T."/>
            <person name="Brosch R."/>
            <person name="Parkhill J."/>
            <person name="Garnier T."/>
            <person name="Churcher C.M."/>
            <person name="Harris D.E."/>
            <person name="Gordon S.V."/>
            <person name="Eiglmeier K."/>
            <person name="Gas S."/>
            <person name="Barry C.E. III"/>
            <person name="Tekaia F."/>
            <person name="Badcock K."/>
            <person name="Basham D."/>
            <person name="Brown D."/>
            <person name="Chillingworth T."/>
            <person name="Connor R."/>
            <person name="Davies R.M."/>
            <person name="Devlin K."/>
            <person name="Feltwell T."/>
            <person name="Gentles S."/>
            <person name="Hamlin N."/>
            <person name="Holroyd S."/>
            <person name="Hornsby T."/>
            <person name="Jagels K."/>
            <person name="Krogh A."/>
            <person name="McLean J."/>
            <person name="Moule S."/>
            <person name="Murphy L.D."/>
            <person name="Oliver S."/>
            <person name="Osborne J."/>
            <person name="Quail M.A."/>
            <person name="Rajandream M.A."/>
            <person name="Rogers J."/>
            <person name="Rutter S."/>
            <person name="Seeger K."/>
            <person name="Skelton S."/>
            <person name="Squares S."/>
            <person name="Squares R."/>
            <person name="Sulston J.E."/>
            <person name="Taylor K."/>
            <person name="Whitehead S."/>
            <person name="Barrell B.G."/>
        </authorList>
    </citation>
    <scope>NUCLEOTIDE SEQUENCE [LARGE SCALE GENOMIC DNA]</scope>
    <source>
        <strain>ATCC 25618 / H37Rv</strain>
    </source>
</reference>
<reference key="2">
    <citation type="journal article" date="2011" name="Mol. Cell. Proteomics">
        <title>Proteogenomic analysis of Mycobacterium tuberculosis by high resolution mass spectrometry.</title>
        <authorList>
            <person name="Kelkar D.S."/>
            <person name="Kumar D."/>
            <person name="Kumar P."/>
            <person name="Balakrishnan L."/>
            <person name="Muthusamy B."/>
            <person name="Yadav A.K."/>
            <person name="Shrivastava P."/>
            <person name="Marimuthu A."/>
            <person name="Anand S."/>
            <person name="Sundaram H."/>
            <person name="Kingsbury R."/>
            <person name="Harsha H.C."/>
            <person name="Nair B."/>
            <person name="Prasad T.S."/>
            <person name="Chauhan D.S."/>
            <person name="Katoch K."/>
            <person name="Katoch V.M."/>
            <person name="Kumar P."/>
            <person name="Chaerkady R."/>
            <person name="Ramachandran S."/>
            <person name="Dash D."/>
            <person name="Pandey A."/>
        </authorList>
    </citation>
    <scope>IDENTIFICATION BY MASS SPECTROMETRY [LARGE SCALE ANALYSIS]</scope>
    <source>
        <strain>ATCC 25618 / H37Rv</strain>
    </source>
</reference>
<accession>P9WLH3</accession>
<accession>L0TBN9</accession>
<accession>Q10513</accession>
<gene>
    <name type="ordered locus">Rv2229c</name>
    <name type="ORF">MTCY427.10c</name>
</gene>